<proteinExistence type="inferred from homology"/>
<feature type="chain" id="PRO_0000129937" description="Small ribosomal subunit protein uS19">
    <location>
        <begin position="1"/>
        <end position="92"/>
    </location>
</feature>
<gene>
    <name evidence="1" type="primary">rpsS</name>
    <name type="ordered locus">VP0261</name>
</gene>
<sequence length="92" mass="10427">MPRSLKKGPFIDLHLLKKVEKAVESGDKKPIKTWSRRSMIIPTMIGLTIAVHNGRQHVPVFVTDEMIGHKLGEFAPTRTYRGHAADKKAKKR</sequence>
<protein>
    <recommendedName>
        <fullName evidence="1">Small ribosomal subunit protein uS19</fullName>
    </recommendedName>
    <alternativeName>
        <fullName evidence="2">30S ribosomal protein S19</fullName>
    </alternativeName>
</protein>
<reference key="1">
    <citation type="journal article" date="2003" name="Lancet">
        <title>Genome sequence of Vibrio parahaemolyticus: a pathogenic mechanism distinct from that of V. cholerae.</title>
        <authorList>
            <person name="Makino K."/>
            <person name="Oshima K."/>
            <person name="Kurokawa K."/>
            <person name="Yokoyama K."/>
            <person name="Uda T."/>
            <person name="Tagomori K."/>
            <person name="Iijima Y."/>
            <person name="Najima M."/>
            <person name="Nakano M."/>
            <person name="Yamashita A."/>
            <person name="Kubota Y."/>
            <person name="Kimura S."/>
            <person name="Yasunaga T."/>
            <person name="Honda T."/>
            <person name="Shinagawa H."/>
            <person name="Hattori M."/>
            <person name="Iida T."/>
        </authorList>
    </citation>
    <scope>NUCLEOTIDE SEQUENCE [LARGE SCALE GENOMIC DNA]</scope>
    <source>
        <strain>RIMD 2210633</strain>
    </source>
</reference>
<dbReference type="EMBL" id="BA000031">
    <property type="protein sequence ID" value="BAC58524.1"/>
    <property type="molecule type" value="Genomic_DNA"/>
</dbReference>
<dbReference type="RefSeq" id="NP_796640.1">
    <property type="nucleotide sequence ID" value="NC_004603.1"/>
</dbReference>
<dbReference type="RefSeq" id="WP_004394525.1">
    <property type="nucleotide sequence ID" value="NC_004603.1"/>
</dbReference>
<dbReference type="SMR" id="Q87T09"/>
<dbReference type="GeneID" id="79888793"/>
<dbReference type="KEGG" id="vpa:VP0261"/>
<dbReference type="PATRIC" id="fig|223926.6.peg.252"/>
<dbReference type="eggNOG" id="COG0185">
    <property type="taxonomic scope" value="Bacteria"/>
</dbReference>
<dbReference type="HOGENOM" id="CLU_144911_0_1_6"/>
<dbReference type="Proteomes" id="UP000002493">
    <property type="component" value="Chromosome 1"/>
</dbReference>
<dbReference type="GO" id="GO:0005737">
    <property type="term" value="C:cytoplasm"/>
    <property type="evidence" value="ECO:0007669"/>
    <property type="project" value="UniProtKB-ARBA"/>
</dbReference>
<dbReference type="GO" id="GO:0015935">
    <property type="term" value="C:small ribosomal subunit"/>
    <property type="evidence" value="ECO:0007669"/>
    <property type="project" value="InterPro"/>
</dbReference>
<dbReference type="GO" id="GO:0019843">
    <property type="term" value="F:rRNA binding"/>
    <property type="evidence" value="ECO:0007669"/>
    <property type="project" value="UniProtKB-UniRule"/>
</dbReference>
<dbReference type="GO" id="GO:0003735">
    <property type="term" value="F:structural constituent of ribosome"/>
    <property type="evidence" value="ECO:0007669"/>
    <property type="project" value="InterPro"/>
</dbReference>
<dbReference type="GO" id="GO:0000028">
    <property type="term" value="P:ribosomal small subunit assembly"/>
    <property type="evidence" value="ECO:0007669"/>
    <property type="project" value="TreeGrafter"/>
</dbReference>
<dbReference type="GO" id="GO:0006412">
    <property type="term" value="P:translation"/>
    <property type="evidence" value="ECO:0007669"/>
    <property type="project" value="UniProtKB-UniRule"/>
</dbReference>
<dbReference type="FunFam" id="3.30.860.10:FF:000001">
    <property type="entry name" value="30S ribosomal protein S19"/>
    <property type="match status" value="1"/>
</dbReference>
<dbReference type="Gene3D" id="3.30.860.10">
    <property type="entry name" value="30s Ribosomal Protein S19, Chain A"/>
    <property type="match status" value="1"/>
</dbReference>
<dbReference type="HAMAP" id="MF_00531">
    <property type="entry name" value="Ribosomal_uS19"/>
    <property type="match status" value="1"/>
</dbReference>
<dbReference type="InterPro" id="IPR002222">
    <property type="entry name" value="Ribosomal_uS19"/>
</dbReference>
<dbReference type="InterPro" id="IPR005732">
    <property type="entry name" value="Ribosomal_uS19_bac-type"/>
</dbReference>
<dbReference type="InterPro" id="IPR020934">
    <property type="entry name" value="Ribosomal_uS19_CS"/>
</dbReference>
<dbReference type="InterPro" id="IPR023575">
    <property type="entry name" value="Ribosomal_uS19_SF"/>
</dbReference>
<dbReference type="NCBIfam" id="TIGR01050">
    <property type="entry name" value="rpsS_bact"/>
    <property type="match status" value="1"/>
</dbReference>
<dbReference type="PANTHER" id="PTHR11880">
    <property type="entry name" value="RIBOSOMAL PROTEIN S19P FAMILY MEMBER"/>
    <property type="match status" value="1"/>
</dbReference>
<dbReference type="PANTHER" id="PTHR11880:SF8">
    <property type="entry name" value="SMALL RIBOSOMAL SUBUNIT PROTEIN US19M"/>
    <property type="match status" value="1"/>
</dbReference>
<dbReference type="Pfam" id="PF00203">
    <property type="entry name" value="Ribosomal_S19"/>
    <property type="match status" value="1"/>
</dbReference>
<dbReference type="PIRSF" id="PIRSF002144">
    <property type="entry name" value="Ribosomal_S19"/>
    <property type="match status" value="1"/>
</dbReference>
<dbReference type="PRINTS" id="PR00975">
    <property type="entry name" value="RIBOSOMALS19"/>
</dbReference>
<dbReference type="SUPFAM" id="SSF54570">
    <property type="entry name" value="Ribosomal protein S19"/>
    <property type="match status" value="1"/>
</dbReference>
<dbReference type="PROSITE" id="PS00323">
    <property type="entry name" value="RIBOSOMAL_S19"/>
    <property type="match status" value="1"/>
</dbReference>
<name>RS19_VIBPA</name>
<organism>
    <name type="scientific">Vibrio parahaemolyticus serotype O3:K6 (strain RIMD 2210633)</name>
    <dbReference type="NCBI Taxonomy" id="223926"/>
    <lineage>
        <taxon>Bacteria</taxon>
        <taxon>Pseudomonadati</taxon>
        <taxon>Pseudomonadota</taxon>
        <taxon>Gammaproteobacteria</taxon>
        <taxon>Vibrionales</taxon>
        <taxon>Vibrionaceae</taxon>
        <taxon>Vibrio</taxon>
    </lineage>
</organism>
<evidence type="ECO:0000255" key="1">
    <source>
        <dbReference type="HAMAP-Rule" id="MF_00531"/>
    </source>
</evidence>
<evidence type="ECO:0000305" key="2"/>
<comment type="function">
    <text evidence="1">Protein S19 forms a complex with S13 that binds strongly to the 16S ribosomal RNA.</text>
</comment>
<comment type="similarity">
    <text evidence="1">Belongs to the universal ribosomal protein uS19 family.</text>
</comment>
<accession>Q87T09</accession>
<keyword id="KW-0687">Ribonucleoprotein</keyword>
<keyword id="KW-0689">Ribosomal protein</keyword>
<keyword id="KW-0694">RNA-binding</keyword>
<keyword id="KW-0699">rRNA-binding</keyword>